<gene>
    <name evidence="1" type="primary">rsmH</name>
    <name type="synonym">mraW</name>
    <name type="ordered locus">YE0664</name>
</gene>
<feature type="chain" id="PRO_0000387218" description="Ribosomal RNA small subunit methyltransferase H">
    <location>
        <begin position="1"/>
        <end position="320"/>
    </location>
</feature>
<feature type="binding site" evidence="1">
    <location>
        <begin position="42"/>
        <end position="44"/>
    </location>
    <ligand>
        <name>S-adenosyl-L-methionine</name>
        <dbReference type="ChEBI" id="CHEBI:59789"/>
    </ligand>
</feature>
<feature type="binding site" evidence="1">
    <location>
        <position position="62"/>
    </location>
    <ligand>
        <name>S-adenosyl-L-methionine</name>
        <dbReference type="ChEBI" id="CHEBI:59789"/>
    </ligand>
</feature>
<feature type="binding site" evidence="1">
    <location>
        <position position="86"/>
    </location>
    <ligand>
        <name>S-adenosyl-L-methionine</name>
        <dbReference type="ChEBI" id="CHEBI:59789"/>
    </ligand>
</feature>
<feature type="binding site" evidence="1">
    <location>
        <position position="108"/>
    </location>
    <ligand>
        <name>S-adenosyl-L-methionine</name>
        <dbReference type="ChEBI" id="CHEBI:59789"/>
    </ligand>
</feature>
<feature type="binding site" evidence="1">
    <location>
        <position position="115"/>
    </location>
    <ligand>
        <name>S-adenosyl-L-methionine</name>
        <dbReference type="ChEBI" id="CHEBI:59789"/>
    </ligand>
</feature>
<proteinExistence type="inferred from homology"/>
<sequence>MVDNNKTVDNNYKHTSVLLDEAVNGLNIRDNGIYIDGTFGRGGHSRLILSQLGPEGRLIAIDRDPQAIEAAKSITDPRFSIVHGPFSDLAHYVRELNLVGRINGVLLDLGVSSPQLDDPERGFSFMRDGPLDMRMDPTRGISAAEWLMKASADDIAWVLKTFGEERFAKRLAKAIVERNLTQPMTRTKELADLIANASPFREKHKHPATRSFQAIRIYINSELEEIERALDGALEVLAPEGRLSVISFHSLEDRIVKNFIRHHSRGPQVPAGLPLTEAQLRSMGGRTLKSVGKMMPPDAEVAENPRARSSVLRFAERIKE</sequence>
<evidence type="ECO:0000255" key="1">
    <source>
        <dbReference type="HAMAP-Rule" id="MF_01007"/>
    </source>
</evidence>
<comment type="function">
    <text evidence="1">Specifically methylates the N4 position of cytidine in position 1402 (C1402) of 16S rRNA.</text>
</comment>
<comment type="catalytic activity">
    <reaction evidence="1">
        <text>cytidine(1402) in 16S rRNA + S-adenosyl-L-methionine = N(4)-methylcytidine(1402) in 16S rRNA + S-adenosyl-L-homocysteine + H(+)</text>
        <dbReference type="Rhea" id="RHEA:42928"/>
        <dbReference type="Rhea" id="RHEA-COMP:10286"/>
        <dbReference type="Rhea" id="RHEA-COMP:10287"/>
        <dbReference type="ChEBI" id="CHEBI:15378"/>
        <dbReference type="ChEBI" id="CHEBI:57856"/>
        <dbReference type="ChEBI" id="CHEBI:59789"/>
        <dbReference type="ChEBI" id="CHEBI:74506"/>
        <dbReference type="ChEBI" id="CHEBI:82748"/>
        <dbReference type="EC" id="2.1.1.199"/>
    </reaction>
</comment>
<comment type="subcellular location">
    <subcellularLocation>
        <location evidence="1">Cytoplasm</location>
    </subcellularLocation>
</comment>
<comment type="similarity">
    <text evidence="1">Belongs to the methyltransferase superfamily. RsmH family.</text>
</comment>
<keyword id="KW-0963">Cytoplasm</keyword>
<keyword id="KW-0489">Methyltransferase</keyword>
<keyword id="KW-0698">rRNA processing</keyword>
<keyword id="KW-0949">S-adenosyl-L-methionine</keyword>
<keyword id="KW-0808">Transferase</keyword>
<dbReference type="EC" id="2.1.1.199" evidence="1"/>
<dbReference type="EMBL" id="AM286415">
    <property type="protein sequence ID" value="CAL10773.1"/>
    <property type="molecule type" value="Genomic_DNA"/>
</dbReference>
<dbReference type="RefSeq" id="WP_011815565.1">
    <property type="nucleotide sequence ID" value="NC_008800.1"/>
</dbReference>
<dbReference type="RefSeq" id="YP_001005013.1">
    <property type="nucleotide sequence ID" value="NC_008800.1"/>
</dbReference>
<dbReference type="SMR" id="A1JJI5"/>
<dbReference type="KEGG" id="yen:YE0664"/>
<dbReference type="PATRIC" id="fig|393305.7.peg.759"/>
<dbReference type="eggNOG" id="COG0275">
    <property type="taxonomic scope" value="Bacteria"/>
</dbReference>
<dbReference type="HOGENOM" id="CLU_038422_2_0_6"/>
<dbReference type="OrthoDB" id="9806637at2"/>
<dbReference type="Proteomes" id="UP000000642">
    <property type="component" value="Chromosome"/>
</dbReference>
<dbReference type="GO" id="GO:0005737">
    <property type="term" value="C:cytoplasm"/>
    <property type="evidence" value="ECO:0007669"/>
    <property type="project" value="UniProtKB-SubCell"/>
</dbReference>
<dbReference type="GO" id="GO:0071424">
    <property type="term" value="F:rRNA (cytosine-N4-)-methyltransferase activity"/>
    <property type="evidence" value="ECO:0007669"/>
    <property type="project" value="UniProtKB-UniRule"/>
</dbReference>
<dbReference type="GO" id="GO:0070475">
    <property type="term" value="P:rRNA base methylation"/>
    <property type="evidence" value="ECO:0007669"/>
    <property type="project" value="UniProtKB-UniRule"/>
</dbReference>
<dbReference type="FunFam" id="1.10.150.170:FF:000001">
    <property type="entry name" value="Ribosomal RNA small subunit methyltransferase H"/>
    <property type="match status" value="1"/>
</dbReference>
<dbReference type="Gene3D" id="1.10.150.170">
    <property type="entry name" value="Putative methyltransferase TM0872, insert domain"/>
    <property type="match status" value="1"/>
</dbReference>
<dbReference type="Gene3D" id="3.40.50.150">
    <property type="entry name" value="Vaccinia Virus protein VP39"/>
    <property type="match status" value="1"/>
</dbReference>
<dbReference type="HAMAP" id="MF_01007">
    <property type="entry name" value="16SrRNA_methyltr_H"/>
    <property type="match status" value="1"/>
</dbReference>
<dbReference type="InterPro" id="IPR002903">
    <property type="entry name" value="RsmH"/>
</dbReference>
<dbReference type="InterPro" id="IPR023397">
    <property type="entry name" value="SAM-dep_MeTrfase_MraW_recog"/>
</dbReference>
<dbReference type="InterPro" id="IPR029063">
    <property type="entry name" value="SAM-dependent_MTases_sf"/>
</dbReference>
<dbReference type="NCBIfam" id="TIGR00006">
    <property type="entry name" value="16S rRNA (cytosine(1402)-N(4))-methyltransferase RsmH"/>
    <property type="match status" value="1"/>
</dbReference>
<dbReference type="PANTHER" id="PTHR11265:SF0">
    <property type="entry name" value="12S RRNA N4-METHYLCYTIDINE METHYLTRANSFERASE"/>
    <property type="match status" value="1"/>
</dbReference>
<dbReference type="PANTHER" id="PTHR11265">
    <property type="entry name" value="S-ADENOSYL-METHYLTRANSFERASE MRAW"/>
    <property type="match status" value="1"/>
</dbReference>
<dbReference type="Pfam" id="PF01795">
    <property type="entry name" value="Methyltransf_5"/>
    <property type="match status" value="1"/>
</dbReference>
<dbReference type="PIRSF" id="PIRSF004486">
    <property type="entry name" value="MraW"/>
    <property type="match status" value="1"/>
</dbReference>
<dbReference type="SUPFAM" id="SSF81799">
    <property type="entry name" value="Putative methyltransferase TM0872, insert domain"/>
    <property type="match status" value="1"/>
</dbReference>
<dbReference type="SUPFAM" id="SSF53335">
    <property type="entry name" value="S-adenosyl-L-methionine-dependent methyltransferases"/>
    <property type="match status" value="1"/>
</dbReference>
<accession>A1JJI5</accession>
<organism>
    <name type="scientific">Yersinia enterocolitica serotype O:8 / biotype 1B (strain NCTC 13174 / 8081)</name>
    <dbReference type="NCBI Taxonomy" id="393305"/>
    <lineage>
        <taxon>Bacteria</taxon>
        <taxon>Pseudomonadati</taxon>
        <taxon>Pseudomonadota</taxon>
        <taxon>Gammaproteobacteria</taxon>
        <taxon>Enterobacterales</taxon>
        <taxon>Yersiniaceae</taxon>
        <taxon>Yersinia</taxon>
    </lineage>
</organism>
<reference key="1">
    <citation type="journal article" date="2006" name="PLoS Genet.">
        <title>The complete genome sequence and comparative genome analysis of the high pathogenicity Yersinia enterocolitica strain 8081.</title>
        <authorList>
            <person name="Thomson N.R."/>
            <person name="Howard S."/>
            <person name="Wren B.W."/>
            <person name="Holden M.T.G."/>
            <person name="Crossman L."/>
            <person name="Challis G.L."/>
            <person name="Churcher C."/>
            <person name="Mungall K."/>
            <person name="Brooks K."/>
            <person name="Chillingworth T."/>
            <person name="Feltwell T."/>
            <person name="Abdellah Z."/>
            <person name="Hauser H."/>
            <person name="Jagels K."/>
            <person name="Maddison M."/>
            <person name="Moule S."/>
            <person name="Sanders M."/>
            <person name="Whitehead S."/>
            <person name="Quail M.A."/>
            <person name="Dougan G."/>
            <person name="Parkhill J."/>
            <person name="Prentice M.B."/>
        </authorList>
    </citation>
    <scope>NUCLEOTIDE SEQUENCE [LARGE SCALE GENOMIC DNA]</scope>
    <source>
        <strain>NCTC 13174 / 8081</strain>
    </source>
</reference>
<name>RSMH_YERE8</name>
<protein>
    <recommendedName>
        <fullName evidence="1">Ribosomal RNA small subunit methyltransferase H</fullName>
        <ecNumber evidence="1">2.1.1.199</ecNumber>
    </recommendedName>
    <alternativeName>
        <fullName evidence="1">16S rRNA m(4)C1402 methyltransferase</fullName>
    </alternativeName>
    <alternativeName>
        <fullName evidence="1">rRNA (cytosine-N(4)-)-methyltransferase RsmH</fullName>
    </alternativeName>
</protein>